<name>RECR_HELPG</name>
<organism>
    <name type="scientific">Helicobacter pylori (strain G27)</name>
    <dbReference type="NCBI Taxonomy" id="563041"/>
    <lineage>
        <taxon>Bacteria</taxon>
        <taxon>Pseudomonadati</taxon>
        <taxon>Campylobacterota</taxon>
        <taxon>Epsilonproteobacteria</taxon>
        <taxon>Campylobacterales</taxon>
        <taxon>Helicobacteraceae</taxon>
        <taxon>Helicobacter</taxon>
    </lineage>
</organism>
<gene>
    <name evidence="1" type="primary">recR</name>
    <name type="ordered locus">HPG27_874</name>
</gene>
<dbReference type="EMBL" id="CP001173">
    <property type="protein sequence ID" value="ACI27628.1"/>
    <property type="molecule type" value="Genomic_DNA"/>
</dbReference>
<dbReference type="RefSeq" id="WP_001099623.1">
    <property type="nucleotide sequence ID" value="NC_011333.1"/>
</dbReference>
<dbReference type="SMR" id="B5Z7S9"/>
<dbReference type="KEGG" id="hpg:HPG27_874"/>
<dbReference type="HOGENOM" id="CLU_060739_1_1_7"/>
<dbReference type="Proteomes" id="UP000001735">
    <property type="component" value="Chromosome"/>
</dbReference>
<dbReference type="GO" id="GO:0003677">
    <property type="term" value="F:DNA binding"/>
    <property type="evidence" value="ECO:0007669"/>
    <property type="project" value="UniProtKB-UniRule"/>
</dbReference>
<dbReference type="GO" id="GO:0008270">
    <property type="term" value="F:zinc ion binding"/>
    <property type="evidence" value="ECO:0007669"/>
    <property type="project" value="UniProtKB-KW"/>
</dbReference>
<dbReference type="GO" id="GO:0006310">
    <property type="term" value="P:DNA recombination"/>
    <property type="evidence" value="ECO:0007669"/>
    <property type="project" value="UniProtKB-UniRule"/>
</dbReference>
<dbReference type="GO" id="GO:0006281">
    <property type="term" value="P:DNA repair"/>
    <property type="evidence" value="ECO:0007669"/>
    <property type="project" value="UniProtKB-UniRule"/>
</dbReference>
<dbReference type="CDD" id="cd01025">
    <property type="entry name" value="TOPRIM_recR"/>
    <property type="match status" value="1"/>
</dbReference>
<dbReference type="Gene3D" id="3.30.60.80">
    <property type="match status" value="1"/>
</dbReference>
<dbReference type="Gene3D" id="3.40.1360.10">
    <property type="match status" value="1"/>
</dbReference>
<dbReference type="Gene3D" id="1.10.8.420">
    <property type="entry name" value="RecR Domain 1"/>
    <property type="match status" value="1"/>
</dbReference>
<dbReference type="HAMAP" id="MF_00017">
    <property type="entry name" value="RecR"/>
    <property type="match status" value="1"/>
</dbReference>
<dbReference type="InterPro" id="IPR000093">
    <property type="entry name" value="DNA_Rcmb_RecR"/>
</dbReference>
<dbReference type="InterPro" id="IPR023627">
    <property type="entry name" value="Rcmb_RecR"/>
</dbReference>
<dbReference type="InterPro" id="IPR015967">
    <property type="entry name" value="Rcmb_RecR_Znf"/>
</dbReference>
<dbReference type="InterPro" id="IPR006171">
    <property type="entry name" value="TOPRIM_dom"/>
</dbReference>
<dbReference type="InterPro" id="IPR034137">
    <property type="entry name" value="TOPRIM_RecR"/>
</dbReference>
<dbReference type="NCBIfam" id="TIGR00615">
    <property type="entry name" value="recR"/>
    <property type="match status" value="1"/>
</dbReference>
<dbReference type="PANTHER" id="PTHR30446">
    <property type="entry name" value="RECOMBINATION PROTEIN RECR"/>
    <property type="match status" value="1"/>
</dbReference>
<dbReference type="PANTHER" id="PTHR30446:SF0">
    <property type="entry name" value="RECOMBINATION PROTEIN RECR"/>
    <property type="match status" value="1"/>
</dbReference>
<dbReference type="Pfam" id="PF21176">
    <property type="entry name" value="RecR_HhH"/>
    <property type="match status" value="1"/>
</dbReference>
<dbReference type="Pfam" id="PF02132">
    <property type="entry name" value="RecR_ZnF"/>
    <property type="match status" value="1"/>
</dbReference>
<dbReference type="SUPFAM" id="SSF111304">
    <property type="entry name" value="Recombination protein RecR"/>
    <property type="match status" value="1"/>
</dbReference>
<dbReference type="PROSITE" id="PS01300">
    <property type="entry name" value="RECR"/>
    <property type="match status" value="1"/>
</dbReference>
<dbReference type="PROSITE" id="PS50880">
    <property type="entry name" value="TOPRIM"/>
    <property type="match status" value="1"/>
</dbReference>
<reference key="1">
    <citation type="journal article" date="2009" name="J. Bacteriol.">
        <title>The complete genome sequence of Helicobacter pylori strain G27.</title>
        <authorList>
            <person name="Baltrus D.A."/>
            <person name="Amieva M.R."/>
            <person name="Covacci A."/>
            <person name="Lowe T.M."/>
            <person name="Merrell D.S."/>
            <person name="Ottemann K.M."/>
            <person name="Stein M."/>
            <person name="Salama N.R."/>
            <person name="Guillemin K."/>
        </authorList>
    </citation>
    <scope>NUCLEOTIDE SEQUENCE [LARGE SCALE GENOMIC DNA]</scope>
    <source>
        <strain>G27</strain>
    </source>
</reference>
<sequence>MNTYKNSLNHFLNLVDCLEKIPNVGKKSAFKMAYHLGLENPYLALKITHALENALENLKTCSSCNALSESEVCEICSDESRQNSQLCMVLHPRDVFILEDLKDFLGRYYVLNSIEEVDFNALEKRLIEENIKEIIFAFPPTLANDSLMLYIEDKLQRFHLTFTKIAQGVPTGVNFENIDSVSLSRAFNSRIKA</sequence>
<evidence type="ECO:0000255" key="1">
    <source>
        <dbReference type="HAMAP-Rule" id="MF_00017"/>
    </source>
</evidence>
<accession>B5Z7S9</accession>
<proteinExistence type="inferred from homology"/>
<comment type="function">
    <text evidence="1">May play a role in DNA repair. It seems to be involved in an RecBC-independent recombinational process of DNA repair. It may act with RecF and RecO.</text>
</comment>
<comment type="similarity">
    <text evidence="1">Belongs to the RecR family.</text>
</comment>
<keyword id="KW-0227">DNA damage</keyword>
<keyword id="KW-0233">DNA recombination</keyword>
<keyword id="KW-0234">DNA repair</keyword>
<keyword id="KW-0479">Metal-binding</keyword>
<keyword id="KW-1185">Reference proteome</keyword>
<keyword id="KW-0862">Zinc</keyword>
<keyword id="KW-0863">Zinc-finger</keyword>
<protein>
    <recommendedName>
        <fullName evidence="1">Recombination protein RecR</fullName>
    </recommendedName>
</protein>
<feature type="chain" id="PRO_1000089735" description="Recombination protein RecR">
    <location>
        <begin position="1"/>
        <end position="193"/>
    </location>
</feature>
<feature type="domain" description="Toprim" evidence="1">
    <location>
        <begin position="84"/>
        <end position="170"/>
    </location>
</feature>
<feature type="zinc finger region" description="C4-type" evidence="1">
    <location>
        <begin position="61"/>
        <end position="76"/>
    </location>
</feature>